<dbReference type="EC" id="3.1.-.-" evidence="4"/>
<dbReference type="EMBL" id="CP054230">
    <property type="protein sequence ID" value="QKY44559.1"/>
    <property type="molecule type" value="Genomic_DNA"/>
</dbReference>
<dbReference type="RefSeq" id="WP_001258365.1">
    <property type="nucleotide sequence ID" value="NZ_WIKR01000024.1"/>
</dbReference>
<dbReference type="PDB" id="7T2S">
    <property type="method" value="X-ray"/>
    <property type="resolution" value="1.82 A"/>
    <property type="chains" value="A=1-187"/>
</dbReference>
<dbReference type="PDBsum" id="7T2S"/>
<dbReference type="SMR" id="P0DX80"/>
<dbReference type="GO" id="GO:0005829">
    <property type="term" value="C:cytosol"/>
    <property type="evidence" value="ECO:0007669"/>
    <property type="project" value="TreeGrafter"/>
</dbReference>
<dbReference type="GO" id="GO:0008408">
    <property type="term" value="F:3'-5' exonuclease activity"/>
    <property type="evidence" value="ECO:0007669"/>
    <property type="project" value="TreeGrafter"/>
</dbReference>
<dbReference type="GO" id="GO:0046872">
    <property type="term" value="F:metal ion binding"/>
    <property type="evidence" value="ECO:0007669"/>
    <property type="project" value="UniProtKB-KW"/>
</dbReference>
<dbReference type="GO" id="GO:0003676">
    <property type="term" value="F:nucleic acid binding"/>
    <property type="evidence" value="ECO:0007669"/>
    <property type="project" value="InterPro"/>
</dbReference>
<dbReference type="GO" id="GO:0051607">
    <property type="term" value="P:defense response to virus"/>
    <property type="evidence" value="ECO:0007669"/>
    <property type="project" value="UniProtKB-KW"/>
</dbReference>
<dbReference type="GO" id="GO:0006259">
    <property type="term" value="P:DNA metabolic process"/>
    <property type="evidence" value="ECO:0007669"/>
    <property type="project" value="UniProtKB-ARBA"/>
</dbReference>
<dbReference type="CDD" id="cd06127">
    <property type="entry name" value="DEDDh"/>
    <property type="match status" value="1"/>
</dbReference>
<dbReference type="Gene3D" id="3.30.420.10">
    <property type="entry name" value="Ribonuclease H-like superfamily/Ribonuclease H"/>
    <property type="match status" value="1"/>
</dbReference>
<dbReference type="InterPro" id="IPR013520">
    <property type="entry name" value="Exonuclease_RNaseT/DNA_pol3"/>
</dbReference>
<dbReference type="InterPro" id="IPR012337">
    <property type="entry name" value="RNaseH-like_sf"/>
</dbReference>
<dbReference type="InterPro" id="IPR036397">
    <property type="entry name" value="RNaseH_sf"/>
</dbReference>
<dbReference type="PANTHER" id="PTHR30231">
    <property type="entry name" value="DNA POLYMERASE III SUBUNIT EPSILON"/>
    <property type="match status" value="1"/>
</dbReference>
<dbReference type="PANTHER" id="PTHR30231:SF4">
    <property type="entry name" value="PROTEIN NEN2"/>
    <property type="match status" value="1"/>
</dbReference>
<dbReference type="Pfam" id="PF00929">
    <property type="entry name" value="RNase_T"/>
    <property type="match status" value="1"/>
</dbReference>
<dbReference type="SMART" id="SM00479">
    <property type="entry name" value="EXOIII"/>
    <property type="match status" value="1"/>
</dbReference>
<dbReference type="SUPFAM" id="SSF53098">
    <property type="entry name" value="Ribonuclease H-like"/>
    <property type="match status" value="1"/>
</dbReference>
<reference evidence="8" key="1">
    <citation type="journal article" date="2020" name="Microbiol. Resour. Announc.">
        <title>Complete Genome Sequences of Seven Uropathogenic Escherichia coli Strains Isolated from Postmenopausal Women with Recurrent Urinary Tract Infection.</title>
        <authorList>
            <person name="Sharon B.M."/>
            <person name="Nguyen A."/>
            <person name="Arute A.P."/>
            <person name="Hulyalkar N.V."/>
            <person name="Nguyen V.H."/>
            <person name="Zimmern P.E."/>
            <person name="De Nisco N.J."/>
        </authorList>
    </citation>
    <scope>NUCLEOTIDE SEQUENCE [LARGE SCALE GENOMIC DNA]</scope>
    <source>
        <strain>EcPF14 UPEC</strain>
    </source>
</reference>
<reference key="2">
    <citation type="journal article" date="2022" name="Nucleic Acids Res.">
        <title>Control of bacterial immune signaling by a WYL domain transcription factor.</title>
        <authorList>
            <person name="Blankenchip C.L."/>
            <person name="Nguyen J.V."/>
            <person name="Lau R.K."/>
            <person name="Ye Q."/>
            <person name="Gu Y."/>
            <person name="Corbett K.D."/>
        </authorList>
    </citation>
    <scope>FUNCTION IN VIRAL DEFENSE</scope>
    <scope>MUTAGENESIS OF ASP-165</scope>
    <source>
        <strain>EcPF14 UPEC</strain>
    </source>
</reference>
<reference evidence="9" key="3">
    <citation type="journal article" date="2022" name="Protein Sci.">
        <title>Structure and activity of a bacterial defense-associated 3'-5' exonuclease.</title>
        <authorList>
            <person name="Liang Q."/>
            <person name="Richey S.T."/>
            <person name="Ur S.N."/>
            <person name="Ye Q."/>
            <person name="Lau R.K."/>
            <person name="Corbett K.D."/>
        </authorList>
    </citation>
    <scope>X-RAY CRYSTALLOGRAPHY (1.82 ANGSTROMS)</scope>
    <scope>FUNCTION</scope>
    <scope>CATALYTIC ACTIVITY</scope>
    <scope>SUBUNIT</scope>
    <scope>MUTAGENESIS OF ASP-165</scope>
    <source>
        <strain>UPEC-117</strain>
    </source>
</reference>
<feature type="chain" id="PRO_0000459343" description="3'-5' DNA exonuclease Cap18">
    <location>
        <begin position="1"/>
        <end position="187"/>
    </location>
</feature>
<feature type="domain" description="Exonuclease" evidence="2">
    <location>
        <begin position="9"/>
        <end position="173"/>
    </location>
</feature>
<feature type="active site" description="Proton donor/acceptor" evidence="1">
    <location>
        <position position="160"/>
    </location>
</feature>
<feature type="binding site" evidence="1">
    <location>
        <position position="12"/>
    </location>
    <ligand>
        <name>Mg(2+)</name>
        <dbReference type="ChEBI" id="CHEBI:18420"/>
        <label>1</label>
        <note>catalytic</note>
    </ligand>
</feature>
<feature type="binding site" evidence="1">
    <location>
        <position position="12"/>
    </location>
    <ligand>
        <name>Mg(2+)</name>
        <dbReference type="ChEBI" id="CHEBI:18420"/>
        <label>2</label>
        <note>catalytic</note>
    </ligand>
</feature>
<feature type="binding site" evidence="1">
    <location>
        <position position="25"/>
    </location>
    <ligand>
        <name>Mg(2+)</name>
        <dbReference type="ChEBI" id="CHEBI:18420"/>
        <label>2</label>
        <note>catalytic</note>
    </ligand>
</feature>
<feature type="binding site" evidence="1">
    <location>
        <position position="160"/>
    </location>
    <ligand>
        <name>Mg(2+)</name>
        <dbReference type="ChEBI" id="CHEBI:18420"/>
        <label>2</label>
        <note>catalytic</note>
    </ligand>
</feature>
<feature type="binding site" evidence="1">
    <location>
        <position position="165"/>
    </location>
    <ligand>
        <name>Mg(2+)</name>
        <dbReference type="ChEBI" id="CHEBI:18420"/>
        <label>2</label>
        <note>catalytic</note>
    </ligand>
</feature>
<feature type="mutagenesis site" description="Loss of exonuclease activity. Increased resistance to bacteriophage lambda." evidence="3 4">
    <original>D</original>
    <variation>N</variation>
    <location>
        <position position="165"/>
    </location>
</feature>
<feature type="strand" evidence="10">
    <location>
        <begin position="6"/>
        <end position="20"/>
    </location>
</feature>
<feature type="strand" evidence="10">
    <location>
        <begin position="25"/>
        <end position="32"/>
    </location>
</feature>
<feature type="strand" evidence="10">
    <location>
        <begin position="35"/>
        <end position="44"/>
    </location>
</feature>
<feature type="helix" evidence="10">
    <location>
        <begin position="53"/>
        <end position="59"/>
    </location>
</feature>
<feature type="helix" evidence="10">
    <location>
        <begin position="63"/>
        <end position="69"/>
    </location>
</feature>
<feature type="helix" evidence="10">
    <location>
        <begin position="73"/>
        <end position="87"/>
    </location>
</feature>
<feature type="strand" evidence="10">
    <location>
        <begin position="93"/>
        <end position="98"/>
    </location>
</feature>
<feature type="helix" evidence="10">
    <location>
        <begin position="101"/>
        <end position="115"/>
    </location>
</feature>
<feature type="strand" evidence="10">
    <location>
        <begin position="125"/>
        <end position="127"/>
    </location>
</feature>
<feature type="helix" evidence="10">
    <location>
        <begin position="128"/>
        <end position="136"/>
    </location>
</feature>
<feature type="helix" evidence="10">
    <location>
        <begin position="141"/>
        <end position="143"/>
    </location>
</feature>
<feature type="helix" evidence="10">
    <location>
        <begin position="145"/>
        <end position="152"/>
    </location>
</feature>
<feature type="helix" evidence="10">
    <location>
        <begin position="162"/>
        <end position="185"/>
    </location>
</feature>
<keyword id="KW-0002">3D-structure</keyword>
<keyword id="KW-0051">Antiviral defense</keyword>
<keyword id="KW-0269">Exonuclease</keyword>
<keyword id="KW-0378">Hydrolase</keyword>
<keyword id="KW-0460">Magnesium</keyword>
<keyword id="KW-0479">Metal-binding</keyword>
<keyword id="KW-0540">Nuclease</keyword>
<comment type="function">
    <text evidence="3 4 5">Effector component of a CBASS antivirus system (PubMed:35762727). CBASS (cyclic oligonucleotide-based antiphage signaling system) provides immunity against bacteriophage (PubMed:35536256). The CD-NTase protein synthesizes cyclic nucleotides in response to infection; these serve as specific second messenger signals (PubMed:35536256). The signals activate a diverse range of effectors, leading to bacterial cell death and thus abortive phage infection (PubMed:35536256). A type III CBASS system (PubMed:35536256). A sequence non-specific 3'-5' DNA exonuclease that preferentially degrades ssDNA with 3' overhangs or a mismatch at the 3' end (PubMed:35762727). Expression of this CBASS system (Cap17-CapW-CdnC-Cap7-Cap6-Cap18-Cap19) in a susceptible E.coli (strain JP313) confers resistance to bacteriophage lambda cI-- (PubMed:35536256).</text>
</comment>
<comment type="subunit">
    <text evidence="4">Homodimer (PubMed:35762727).</text>
</comment>
<comment type="similarity">
    <text evidence="7">Belongs to the Cap18 exonuclease family.</text>
</comment>
<gene>
    <name evidence="5" type="primary">cap18</name>
    <name evidence="8" type="ORF">HR072_00400</name>
</gene>
<proteinExistence type="evidence at protein level"/>
<name>CAP18_ECOLX</name>
<evidence type="ECO:0000250" key="1">
    <source>
        <dbReference type="UniProtKB" id="P30014"/>
    </source>
</evidence>
<evidence type="ECO:0000255" key="2"/>
<evidence type="ECO:0000269" key="3">
    <source>
    </source>
</evidence>
<evidence type="ECO:0000269" key="4">
    <source>
    </source>
</evidence>
<evidence type="ECO:0000303" key="5">
    <source>
    </source>
</evidence>
<evidence type="ECO:0000303" key="6">
    <source>
    </source>
</evidence>
<evidence type="ECO:0000305" key="7"/>
<evidence type="ECO:0000312" key="8">
    <source>
        <dbReference type="EMBL" id="QKY44559.1"/>
    </source>
</evidence>
<evidence type="ECO:0007744" key="9">
    <source>
        <dbReference type="PDB" id="7T2S"/>
    </source>
</evidence>
<evidence type="ECO:0007829" key="10">
    <source>
        <dbReference type="PDB" id="7T2S"/>
    </source>
</evidence>
<accession>P0DX80</accession>
<protein>
    <recommendedName>
        <fullName evidence="6">3'-5' DNA exonuclease Cap18</fullName>
        <ecNumber evidence="4">3.1.-.-</ecNumber>
    </recommendedName>
    <alternativeName>
        <fullName evidence="7">Exodeoxyribonuclease Cap18</fullName>
    </alternativeName>
</protein>
<organism>
    <name type="scientific">Escherichia coli</name>
    <dbReference type="NCBI Taxonomy" id="562"/>
    <lineage>
        <taxon>Bacteria</taxon>
        <taxon>Pseudomonadati</taxon>
        <taxon>Pseudomonadota</taxon>
        <taxon>Gammaproteobacteria</taxon>
        <taxon>Enterobacterales</taxon>
        <taxon>Enterobacteriaceae</taxon>
        <taxon>Escherichia</taxon>
    </lineage>
</organism>
<sequence>MRTDKEIFVSVDVETSGPIPGKYSMLSIGACVAFEPSKQFSCYLKPISEDFIPAAMEVTGLSLEKLHVDGLDPVDAMVQFKEWINSVVKEDETVVFVGFNASFDWSFINYYFHVYLGDNPFGIAALDIKSMYFGVSHASWRLTRSSEIAKVVKPETYGDHDALHDARYQAELFRLIDKLSEKKKLDR</sequence>